<keyword id="KW-0067">ATP-binding</keyword>
<keyword id="KW-0436">Ligase</keyword>
<keyword id="KW-0547">Nucleotide-binding</keyword>
<keyword id="KW-0648">Protein biosynthesis</keyword>
<accession>Q3KI27</accession>
<organism>
    <name type="scientific">Pseudomonas fluorescens (strain Pf0-1)</name>
    <dbReference type="NCBI Taxonomy" id="205922"/>
    <lineage>
        <taxon>Bacteria</taxon>
        <taxon>Pseudomonadati</taxon>
        <taxon>Pseudomonadota</taxon>
        <taxon>Gammaproteobacteria</taxon>
        <taxon>Pseudomonadales</taxon>
        <taxon>Pseudomonadaceae</taxon>
        <taxon>Pseudomonas</taxon>
    </lineage>
</organism>
<gene>
    <name evidence="1" type="primary">gatA</name>
    <name type="ordered locus">Pfl01_0836</name>
</gene>
<feature type="chain" id="PRO_0000241136" description="Glutamyl-tRNA(Gln) amidotransferase subunit A">
    <location>
        <begin position="1"/>
        <end position="483"/>
    </location>
</feature>
<feature type="active site" description="Charge relay system" evidence="1">
    <location>
        <position position="76"/>
    </location>
</feature>
<feature type="active site" description="Charge relay system" evidence="1">
    <location>
        <position position="151"/>
    </location>
</feature>
<feature type="active site" description="Acyl-ester intermediate" evidence="1">
    <location>
        <position position="175"/>
    </location>
</feature>
<evidence type="ECO:0000255" key="1">
    <source>
        <dbReference type="HAMAP-Rule" id="MF_00120"/>
    </source>
</evidence>
<dbReference type="EC" id="6.3.5.7" evidence="1"/>
<dbReference type="EMBL" id="CP000094">
    <property type="protein sequence ID" value="ABA72579.1"/>
    <property type="molecule type" value="Genomic_DNA"/>
</dbReference>
<dbReference type="RefSeq" id="WP_011332456.1">
    <property type="nucleotide sequence ID" value="NC_007492.2"/>
</dbReference>
<dbReference type="SMR" id="Q3KI27"/>
<dbReference type="KEGG" id="pfo:Pfl01_0836"/>
<dbReference type="eggNOG" id="COG0154">
    <property type="taxonomic scope" value="Bacteria"/>
</dbReference>
<dbReference type="HOGENOM" id="CLU_009600_0_3_6"/>
<dbReference type="Proteomes" id="UP000002704">
    <property type="component" value="Chromosome"/>
</dbReference>
<dbReference type="GO" id="GO:0030956">
    <property type="term" value="C:glutamyl-tRNA(Gln) amidotransferase complex"/>
    <property type="evidence" value="ECO:0007669"/>
    <property type="project" value="InterPro"/>
</dbReference>
<dbReference type="GO" id="GO:0005524">
    <property type="term" value="F:ATP binding"/>
    <property type="evidence" value="ECO:0007669"/>
    <property type="project" value="UniProtKB-KW"/>
</dbReference>
<dbReference type="GO" id="GO:0050567">
    <property type="term" value="F:glutaminyl-tRNA synthase (glutamine-hydrolyzing) activity"/>
    <property type="evidence" value="ECO:0007669"/>
    <property type="project" value="UniProtKB-UniRule"/>
</dbReference>
<dbReference type="GO" id="GO:0006412">
    <property type="term" value="P:translation"/>
    <property type="evidence" value="ECO:0007669"/>
    <property type="project" value="UniProtKB-UniRule"/>
</dbReference>
<dbReference type="Gene3D" id="3.90.1300.10">
    <property type="entry name" value="Amidase signature (AS) domain"/>
    <property type="match status" value="1"/>
</dbReference>
<dbReference type="HAMAP" id="MF_00120">
    <property type="entry name" value="GatA"/>
    <property type="match status" value="1"/>
</dbReference>
<dbReference type="InterPro" id="IPR000120">
    <property type="entry name" value="Amidase"/>
</dbReference>
<dbReference type="InterPro" id="IPR020556">
    <property type="entry name" value="Amidase_CS"/>
</dbReference>
<dbReference type="InterPro" id="IPR023631">
    <property type="entry name" value="Amidase_dom"/>
</dbReference>
<dbReference type="InterPro" id="IPR036928">
    <property type="entry name" value="AS_sf"/>
</dbReference>
<dbReference type="InterPro" id="IPR004412">
    <property type="entry name" value="GatA"/>
</dbReference>
<dbReference type="NCBIfam" id="TIGR00132">
    <property type="entry name" value="gatA"/>
    <property type="match status" value="1"/>
</dbReference>
<dbReference type="PANTHER" id="PTHR11895:SF151">
    <property type="entry name" value="GLUTAMYL-TRNA(GLN) AMIDOTRANSFERASE SUBUNIT A"/>
    <property type="match status" value="1"/>
</dbReference>
<dbReference type="PANTHER" id="PTHR11895">
    <property type="entry name" value="TRANSAMIDASE"/>
    <property type="match status" value="1"/>
</dbReference>
<dbReference type="Pfam" id="PF01425">
    <property type="entry name" value="Amidase"/>
    <property type="match status" value="1"/>
</dbReference>
<dbReference type="SUPFAM" id="SSF75304">
    <property type="entry name" value="Amidase signature (AS) enzymes"/>
    <property type="match status" value="1"/>
</dbReference>
<dbReference type="PROSITE" id="PS00571">
    <property type="entry name" value="AMIDASES"/>
    <property type="match status" value="1"/>
</dbReference>
<reference key="1">
    <citation type="journal article" date="2009" name="Genome Biol.">
        <title>Genomic and genetic analyses of diversity and plant interactions of Pseudomonas fluorescens.</title>
        <authorList>
            <person name="Silby M.W."/>
            <person name="Cerdeno-Tarraga A.M."/>
            <person name="Vernikos G.S."/>
            <person name="Giddens S.R."/>
            <person name="Jackson R.W."/>
            <person name="Preston G.M."/>
            <person name="Zhang X.-X."/>
            <person name="Moon C.D."/>
            <person name="Gehrig S.M."/>
            <person name="Godfrey S.A.C."/>
            <person name="Knight C.G."/>
            <person name="Malone J.G."/>
            <person name="Robinson Z."/>
            <person name="Spiers A.J."/>
            <person name="Harris S."/>
            <person name="Challis G.L."/>
            <person name="Yaxley A.M."/>
            <person name="Harris D."/>
            <person name="Seeger K."/>
            <person name="Murphy L."/>
            <person name="Rutter S."/>
            <person name="Squares R."/>
            <person name="Quail M.A."/>
            <person name="Saunders E."/>
            <person name="Mavromatis K."/>
            <person name="Brettin T.S."/>
            <person name="Bentley S.D."/>
            <person name="Hothersall J."/>
            <person name="Stephens E."/>
            <person name="Thomas C.M."/>
            <person name="Parkhill J."/>
            <person name="Levy S.B."/>
            <person name="Rainey P.B."/>
            <person name="Thomson N.R."/>
        </authorList>
    </citation>
    <scope>NUCLEOTIDE SEQUENCE [LARGE SCALE GENOMIC DNA]</scope>
    <source>
        <strain>Pf0-1</strain>
    </source>
</reference>
<sequence>MHQLTLAEIARGLADKKFSSEELTKVLLARITQLDPQLNSFISLTEELALEQAKAADVRRANGESGALLGAPIAHKDLFCTQGIRTSCGSKMLDNFKAPYDATVVSKLAAAGTVTLGKTNMDEFAMGSANESSWYGAVKNPWNLEHVPGGSSGGSAAAVAARLLPAATATDTGGSIRQPAAFTNLTGLKPTYGRVSRWGMIAYASSLDQGGPLARTAEDCAILLQGMAGFDPNDSTSIDEPVPDYAAGLNGSLQGLRIGVPKEYFGAGLDPRIADLIQNSIKELQKLGAVIKEISLPNMQHAIPAYYVIAPAEASSNLSRFDGVRFGHRCADPKNLEDLYKRSRGEGFGPEVQRRIMVGAYALSAGYYDAYYLKAQKIRRLVKNDFMAAFNEVDIILGPTTPNPAWKLGAKNSDPVAAYLEDVYTITANLAGLPGLSMPAGFVDGLPVGVQLLAPYFQEGRLLNVAHQYQLNTDWHTRTPTGF</sequence>
<comment type="function">
    <text evidence="1">Allows the formation of correctly charged Gln-tRNA(Gln) through the transamidation of misacylated Glu-tRNA(Gln) in organisms which lack glutaminyl-tRNA synthetase. The reaction takes place in the presence of glutamine and ATP through an activated gamma-phospho-Glu-tRNA(Gln).</text>
</comment>
<comment type="catalytic activity">
    <reaction evidence="1">
        <text>L-glutamyl-tRNA(Gln) + L-glutamine + ATP + H2O = L-glutaminyl-tRNA(Gln) + L-glutamate + ADP + phosphate + H(+)</text>
        <dbReference type="Rhea" id="RHEA:17521"/>
        <dbReference type="Rhea" id="RHEA-COMP:9681"/>
        <dbReference type="Rhea" id="RHEA-COMP:9684"/>
        <dbReference type="ChEBI" id="CHEBI:15377"/>
        <dbReference type="ChEBI" id="CHEBI:15378"/>
        <dbReference type="ChEBI" id="CHEBI:29985"/>
        <dbReference type="ChEBI" id="CHEBI:30616"/>
        <dbReference type="ChEBI" id="CHEBI:43474"/>
        <dbReference type="ChEBI" id="CHEBI:58359"/>
        <dbReference type="ChEBI" id="CHEBI:78520"/>
        <dbReference type="ChEBI" id="CHEBI:78521"/>
        <dbReference type="ChEBI" id="CHEBI:456216"/>
        <dbReference type="EC" id="6.3.5.7"/>
    </reaction>
</comment>
<comment type="subunit">
    <text evidence="1">Heterotrimer of A, B and C subunits.</text>
</comment>
<comment type="similarity">
    <text evidence="1">Belongs to the amidase family. GatA subfamily.</text>
</comment>
<proteinExistence type="inferred from homology"/>
<protein>
    <recommendedName>
        <fullName evidence="1">Glutamyl-tRNA(Gln) amidotransferase subunit A</fullName>
        <shortName evidence="1">Glu-ADT subunit A</shortName>
        <ecNumber evidence="1">6.3.5.7</ecNumber>
    </recommendedName>
</protein>
<name>GATA_PSEPF</name>